<reference evidence="2" key="1">
    <citation type="journal article" date="2004" name="J. Biochem.">
        <title>Perinerin, a novel antimicrobial peptide purified from the clamworm Perinereis aibuhitensis Grube and its partial characterization.</title>
        <authorList>
            <person name="Pan W.-D."/>
            <person name="Liu X.-H."/>
            <person name="Ge F."/>
            <person name="Han J."/>
            <person name="Zheng T."/>
        </authorList>
    </citation>
    <scope>PROTEIN SEQUENCE</scope>
    <scope>SYNTHESIS</scope>
    <scope>FUNCTION</scope>
    <scope>MASS SPECTROMETRY</scope>
</reference>
<organism>
    <name type="scientific">Perinereis aibuhitensis</name>
    <name type="common">Korean lugworm</name>
    <name type="synonym">Nereis aibuhitensis</name>
    <dbReference type="NCBI Taxonomy" id="126650"/>
    <lineage>
        <taxon>Eukaryota</taxon>
        <taxon>Metazoa</taxon>
        <taxon>Spiralia</taxon>
        <taxon>Lophotrochozoa</taxon>
        <taxon>Annelida</taxon>
        <taxon>Polychaeta</taxon>
        <taxon>Errantia</taxon>
        <taxon>Phyllodocida</taxon>
        <taxon>Nereididae</taxon>
        <taxon>Perinereis</taxon>
    </lineage>
</organism>
<accession>P84117</accession>
<accession>P83551</accession>
<proteinExistence type="evidence at protein level"/>
<name>PERI_PERAI</name>
<dbReference type="SMR" id="P84117"/>
<dbReference type="GO" id="GO:0042742">
    <property type="term" value="P:defense response to bacterium"/>
    <property type="evidence" value="ECO:0007669"/>
    <property type="project" value="UniProtKB-KW"/>
</dbReference>
<dbReference type="GO" id="GO:0050832">
    <property type="term" value="P:defense response to fungus"/>
    <property type="evidence" value="ECO:0007669"/>
    <property type="project" value="UniProtKB-KW"/>
</dbReference>
<dbReference type="GO" id="GO:0031640">
    <property type="term" value="P:killing of cells of another organism"/>
    <property type="evidence" value="ECO:0007669"/>
    <property type="project" value="UniProtKB-KW"/>
</dbReference>
<keyword id="KW-0044">Antibiotic</keyword>
<keyword id="KW-0929">Antimicrobial</keyword>
<keyword id="KW-0903">Direct protein sequencing</keyword>
<keyword id="KW-0295">Fungicide</keyword>
<comment type="function">
    <text evidence="1">Antibacterial activity against both Gram-negative and Gram-positive bacteria. Shows marked activity against P.aeruginosa, B.megaterium, A.viridans, moderate activity against E.coli K-12, S.aureus and M.luteus, and minor activity against P.vulgaris. Antifungal activity against P.heliothis.</text>
</comment>
<comment type="mass spectrometry" mass="5975.0" method="MALDI" evidence="1"/>
<sequence length="51" mass="5978">FNKLKQGSSKRTCAKCFRKIMPSVHELDERRRGANRWAAGFRKCVSSICRY</sequence>
<protein>
    <recommendedName>
        <fullName>Perinerin</fullName>
    </recommendedName>
</protein>
<feature type="chain" id="PRO_0000058313" description="Perinerin">
    <location>
        <begin position="1"/>
        <end position="51"/>
    </location>
</feature>
<evidence type="ECO:0000269" key="1">
    <source>
    </source>
</evidence>
<evidence type="ECO:0000305" key="2"/>